<feature type="signal peptide" evidence="1">
    <location>
        <begin position="1"/>
        <end position="26"/>
    </location>
</feature>
<feature type="chain" id="PRO_0000031807" description="Glutathione-binding protein GsiB">
    <location>
        <begin position="27"/>
        <end position="512"/>
    </location>
</feature>
<feature type="strand" evidence="7">
    <location>
        <begin position="29"/>
        <end position="36"/>
    </location>
</feature>
<feature type="helix" evidence="7">
    <location>
        <begin position="43"/>
        <end position="45"/>
    </location>
</feature>
<feature type="helix" evidence="7">
    <location>
        <begin position="49"/>
        <end position="55"/>
    </location>
</feature>
<feature type="turn" evidence="7">
    <location>
        <begin position="56"/>
        <end position="58"/>
    </location>
</feature>
<feature type="strand" evidence="7">
    <location>
        <begin position="62"/>
        <end position="65"/>
    </location>
</feature>
<feature type="strand" evidence="7">
    <location>
        <begin position="71"/>
        <end position="81"/>
    </location>
</feature>
<feature type="strand" evidence="7">
    <location>
        <begin position="85"/>
        <end position="92"/>
    </location>
</feature>
<feature type="helix" evidence="7">
    <location>
        <begin position="106"/>
        <end position="116"/>
    </location>
</feature>
<feature type="helix" evidence="7">
    <location>
        <begin position="119"/>
        <end position="121"/>
    </location>
</feature>
<feature type="helix" evidence="7">
    <location>
        <begin position="126"/>
        <end position="128"/>
    </location>
</feature>
<feature type="turn" evidence="7">
    <location>
        <begin position="129"/>
        <end position="131"/>
    </location>
</feature>
<feature type="strand" evidence="7">
    <location>
        <begin position="132"/>
        <end position="139"/>
    </location>
</feature>
<feature type="strand" evidence="7">
    <location>
        <begin position="142"/>
        <end position="149"/>
    </location>
</feature>
<feature type="helix" evidence="7">
    <location>
        <begin position="154"/>
        <end position="158"/>
    </location>
</feature>
<feature type="helix" evidence="7">
    <location>
        <begin position="168"/>
        <end position="174"/>
    </location>
</feature>
<feature type="helix" evidence="7">
    <location>
        <begin position="175"/>
        <end position="177"/>
    </location>
</feature>
<feature type="turn" evidence="7">
    <location>
        <begin position="178"/>
        <end position="180"/>
    </location>
</feature>
<feature type="strand" evidence="7">
    <location>
        <begin position="185"/>
        <end position="194"/>
    </location>
</feature>
<feature type="turn" evidence="7">
    <location>
        <begin position="195"/>
        <end position="197"/>
    </location>
</feature>
<feature type="strand" evidence="7">
    <location>
        <begin position="198"/>
        <end position="203"/>
    </location>
</feature>
<feature type="strand" evidence="7">
    <location>
        <begin position="216"/>
        <end position="222"/>
    </location>
</feature>
<feature type="helix" evidence="7">
    <location>
        <begin position="226"/>
        <end position="235"/>
    </location>
</feature>
<feature type="strand" evidence="7">
    <location>
        <begin position="239"/>
        <end position="241"/>
    </location>
</feature>
<feature type="helix" evidence="7">
    <location>
        <begin position="246"/>
        <end position="254"/>
    </location>
</feature>
<feature type="strand" evidence="7">
    <location>
        <begin position="258"/>
        <end position="273"/>
    </location>
</feature>
<feature type="helix" evidence="7">
    <location>
        <begin position="279"/>
        <end position="281"/>
    </location>
</feature>
<feature type="helix" evidence="7">
    <location>
        <begin position="283"/>
        <end position="292"/>
    </location>
</feature>
<feature type="helix" evidence="7">
    <location>
        <begin position="295"/>
        <end position="303"/>
    </location>
</feature>
<feature type="strand" evidence="7">
    <location>
        <begin position="307"/>
        <end position="309"/>
    </location>
</feature>
<feature type="strand" evidence="7">
    <location>
        <begin position="311"/>
        <end position="314"/>
    </location>
</feature>
<feature type="helix" evidence="7">
    <location>
        <begin position="331"/>
        <end position="341"/>
    </location>
</feature>
<feature type="strand" evidence="7">
    <location>
        <begin position="347"/>
        <end position="354"/>
    </location>
</feature>
<feature type="strand" evidence="7">
    <location>
        <begin position="357"/>
        <end position="359"/>
    </location>
</feature>
<feature type="helix" evidence="7">
    <location>
        <begin position="360"/>
        <end position="373"/>
    </location>
</feature>
<feature type="strand" evidence="7">
    <location>
        <begin position="376"/>
        <end position="383"/>
    </location>
</feature>
<feature type="helix" evidence="7">
    <location>
        <begin position="385"/>
        <end position="391"/>
    </location>
</feature>
<feature type="turn" evidence="7">
    <location>
        <begin position="397"/>
        <end position="399"/>
    </location>
</feature>
<feature type="strand" evidence="7">
    <location>
        <begin position="404"/>
        <end position="410"/>
    </location>
</feature>
<feature type="helix" evidence="7">
    <location>
        <begin position="416"/>
        <end position="424"/>
    </location>
</feature>
<feature type="helix" evidence="7">
    <location>
        <begin position="426"/>
        <end position="428"/>
    </location>
</feature>
<feature type="turn" evidence="7">
    <location>
        <begin position="429"/>
        <end position="432"/>
    </location>
</feature>
<feature type="helix" evidence="7">
    <location>
        <begin position="442"/>
        <end position="452"/>
    </location>
</feature>
<feature type="helix" evidence="7">
    <location>
        <begin position="457"/>
        <end position="474"/>
    </location>
</feature>
<feature type="strand" evidence="7">
    <location>
        <begin position="477"/>
        <end position="490"/>
    </location>
</feature>
<feature type="strand" evidence="7">
    <location>
        <begin position="493"/>
        <end position="495"/>
    </location>
</feature>
<protein>
    <recommendedName>
        <fullName evidence="5">Glutathione-binding protein GsiB</fullName>
    </recommendedName>
</protein>
<proteinExistence type="evidence at protein level"/>
<comment type="function">
    <text evidence="2 3">Part of the ABC transporter complex GsiABCD involved in glutathione import (PubMed:16109926). Binds glutathione (PubMed:30515393).</text>
</comment>
<comment type="subunit">
    <text evidence="3 6">The complex is composed of two ATP-binding proteins (GsiA), two transmembrane proteins (GsiC and GsiD) and a solute-binding protein (GsiB) (Probable). In the presence of glutathione, interacts with the transmembrane proteins GsiC and GsiD (PubMed:30515393).</text>
</comment>
<comment type="subcellular location">
    <subcellularLocation>
        <location evidence="5">Periplasm</location>
    </subcellularLocation>
</comment>
<comment type="domain">
    <text evidence="3">Glutathione binding may promote conformational change, from inactive to active form.</text>
</comment>
<comment type="similarity">
    <text evidence="5">Belongs to the bacterial solute-binding protein 5 family.</text>
</comment>
<keyword id="KW-0002">3D-structure</keyword>
<keyword id="KW-0574">Periplasm</keyword>
<keyword id="KW-1185">Reference proteome</keyword>
<keyword id="KW-0732">Signal</keyword>
<keyword id="KW-0813">Transport</keyword>
<dbReference type="EMBL" id="U00096">
    <property type="protein sequence ID" value="AAC73917.1"/>
    <property type="molecule type" value="Genomic_DNA"/>
</dbReference>
<dbReference type="EMBL" id="AP009048">
    <property type="protein sequence ID" value="BAA35525.2"/>
    <property type="molecule type" value="Genomic_DNA"/>
</dbReference>
<dbReference type="PIR" id="F64820">
    <property type="entry name" value="F64820"/>
</dbReference>
<dbReference type="RefSeq" id="NP_415351.1">
    <property type="nucleotide sequence ID" value="NC_000913.3"/>
</dbReference>
<dbReference type="RefSeq" id="WP_000090140.1">
    <property type="nucleotide sequence ID" value="NZ_SSZK01000002.1"/>
</dbReference>
<dbReference type="PDB" id="1UQW">
    <property type="method" value="X-ray"/>
    <property type="resolution" value="2.72 A"/>
    <property type="chains" value="A/B=24-512"/>
</dbReference>
<dbReference type="PDBsum" id="1UQW"/>
<dbReference type="SMR" id="P75797"/>
<dbReference type="BioGRID" id="4259982">
    <property type="interactions" value="46"/>
</dbReference>
<dbReference type="ComplexPortal" id="CPX-4325">
    <property type="entry name" value="Glutathione ABC transporter complex"/>
</dbReference>
<dbReference type="DIP" id="DIP-12697N"/>
<dbReference type="FunCoup" id="P75797">
    <property type="interactions" value="255"/>
</dbReference>
<dbReference type="IntAct" id="P75797">
    <property type="interactions" value="2"/>
</dbReference>
<dbReference type="STRING" id="511145.b0830"/>
<dbReference type="TCDB" id="3.A.1.5.11">
    <property type="family name" value="the atp-binding cassette (abc) superfamily"/>
</dbReference>
<dbReference type="jPOST" id="P75797"/>
<dbReference type="PaxDb" id="511145-b0830"/>
<dbReference type="EnsemblBacteria" id="AAC73917">
    <property type="protein sequence ID" value="AAC73917"/>
    <property type="gene ID" value="b0830"/>
</dbReference>
<dbReference type="GeneID" id="945459"/>
<dbReference type="KEGG" id="ecj:JW5111"/>
<dbReference type="KEGG" id="eco:b0830"/>
<dbReference type="PATRIC" id="fig|511145.12.peg.857"/>
<dbReference type="EchoBASE" id="EB3246"/>
<dbReference type="eggNOG" id="COG0747">
    <property type="taxonomic scope" value="Bacteria"/>
</dbReference>
<dbReference type="HOGENOM" id="CLU_017028_7_3_6"/>
<dbReference type="InParanoid" id="P75797"/>
<dbReference type="OMA" id="WKESPWV"/>
<dbReference type="OrthoDB" id="9801912at2"/>
<dbReference type="PhylomeDB" id="P75797"/>
<dbReference type="BioCyc" id="EcoCyc:YLIB-MONOMER"/>
<dbReference type="BioCyc" id="MetaCyc:YLIB-MONOMER"/>
<dbReference type="BRENDA" id="7.4.2.10">
    <property type="organism ID" value="2026"/>
</dbReference>
<dbReference type="EvolutionaryTrace" id="P75797"/>
<dbReference type="PRO" id="PR:P75797"/>
<dbReference type="Proteomes" id="UP000000625">
    <property type="component" value="Chromosome"/>
</dbReference>
<dbReference type="GO" id="GO:0055052">
    <property type="term" value="C:ATP-binding cassette (ABC) transporter complex, substrate-binding subunit-containing"/>
    <property type="evidence" value="ECO:0000303"/>
    <property type="project" value="ComplexPortal"/>
</dbReference>
<dbReference type="GO" id="GO:0016020">
    <property type="term" value="C:membrane"/>
    <property type="evidence" value="ECO:0000303"/>
    <property type="project" value="ComplexPortal"/>
</dbReference>
<dbReference type="GO" id="GO:0030288">
    <property type="term" value="C:outer membrane-bounded periplasmic space"/>
    <property type="evidence" value="ECO:0000314"/>
    <property type="project" value="EcoCyc"/>
</dbReference>
<dbReference type="GO" id="GO:1904680">
    <property type="term" value="F:peptide transmembrane transporter activity"/>
    <property type="evidence" value="ECO:0000318"/>
    <property type="project" value="GO_Central"/>
</dbReference>
<dbReference type="GO" id="GO:0042938">
    <property type="term" value="P:dipeptide transport"/>
    <property type="evidence" value="ECO:0000318"/>
    <property type="project" value="GO_Central"/>
</dbReference>
<dbReference type="GO" id="GO:0006974">
    <property type="term" value="P:DNA damage response"/>
    <property type="evidence" value="ECO:0000270"/>
    <property type="project" value="EcoliWiki"/>
</dbReference>
<dbReference type="GO" id="GO:0034635">
    <property type="term" value="P:glutathione transport"/>
    <property type="evidence" value="ECO:0000269"/>
    <property type="project" value="EcoCyc"/>
</dbReference>
<dbReference type="CDD" id="cd08499">
    <property type="entry name" value="PBP2_Ylib_like"/>
    <property type="match status" value="1"/>
</dbReference>
<dbReference type="FunFam" id="3.10.105.10:FF:000003">
    <property type="entry name" value="Glutathione ABC transporter substrate-binding protein GsiB"/>
    <property type="match status" value="1"/>
</dbReference>
<dbReference type="FunFam" id="3.40.190.10:FF:000094">
    <property type="entry name" value="Glutathione ABC transporter substrate-binding protein GsiB"/>
    <property type="match status" value="1"/>
</dbReference>
<dbReference type="FunFam" id="3.90.76.10:FF:000003">
    <property type="entry name" value="Glutathione ABC transporter substrate-binding protein GsiB"/>
    <property type="match status" value="1"/>
</dbReference>
<dbReference type="Gene3D" id="3.90.76.10">
    <property type="entry name" value="Dipeptide-binding Protein, Domain 1"/>
    <property type="match status" value="1"/>
</dbReference>
<dbReference type="Gene3D" id="3.10.105.10">
    <property type="entry name" value="Dipeptide-binding Protein, Domain 3"/>
    <property type="match status" value="1"/>
</dbReference>
<dbReference type="Gene3D" id="3.40.190.10">
    <property type="entry name" value="Periplasmic binding protein-like II"/>
    <property type="match status" value="1"/>
</dbReference>
<dbReference type="InterPro" id="IPR030678">
    <property type="entry name" value="Peptide/Ni-bd"/>
</dbReference>
<dbReference type="InterPro" id="IPR039424">
    <property type="entry name" value="SBP_5"/>
</dbReference>
<dbReference type="InterPro" id="IPR023765">
    <property type="entry name" value="SBP_5_CS"/>
</dbReference>
<dbReference type="InterPro" id="IPR000914">
    <property type="entry name" value="SBP_5_dom"/>
</dbReference>
<dbReference type="NCBIfam" id="NF011942">
    <property type="entry name" value="PRK15413.1"/>
    <property type="match status" value="1"/>
</dbReference>
<dbReference type="PANTHER" id="PTHR30290:SF32">
    <property type="entry name" value="GLUTATHIONE-BINDING PROTEIN GSIB"/>
    <property type="match status" value="1"/>
</dbReference>
<dbReference type="PANTHER" id="PTHR30290">
    <property type="entry name" value="PERIPLASMIC BINDING COMPONENT OF ABC TRANSPORTER"/>
    <property type="match status" value="1"/>
</dbReference>
<dbReference type="Pfam" id="PF00496">
    <property type="entry name" value="SBP_bac_5"/>
    <property type="match status" value="1"/>
</dbReference>
<dbReference type="PIRSF" id="PIRSF002741">
    <property type="entry name" value="MppA"/>
    <property type="match status" value="1"/>
</dbReference>
<dbReference type="SUPFAM" id="SSF53850">
    <property type="entry name" value="Periplasmic binding protein-like II"/>
    <property type="match status" value="1"/>
</dbReference>
<dbReference type="PROSITE" id="PS01040">
    <property type="entry name" value="SBP_BACTERIAL_5"/>
    <property type="match status" value="1"/>
</dbReference>
<accession>P75797</accession>
<accession>Q9R7R5</accession>
<accession>Q9R7R7</accession>
<accession>Q9R7R8</accession>
<organism>
    <name type="scientific">Escherichia coli (strain K12)</name>
    <dbReference type="NCBI Taxonomy" id="83333"/>
    <lineage>
        <taxon>Bacteria</taxon>
        <taxon>Pseudomonadati</taxon>
        <taxon>Pseudomonadota</taxon>
        <taxon>Gammaproteobacteria</taxon>
        <taxon>Enterobacterales</taxon>
        <taxon>Enterobacteriaceae</taxon>
        <taxon>Escherichia</taxon>
    </lineage>
</organism>
<reference key="1">
    <citation type="journal article" date="1996" name="DNA Res.">
        <title>A 718-kb DNA sequence of the Escherichia coli K-12 genome corresponding to the 12.7-28.0 min region on the linkage map.</title>
        <authorList>
            <person name="Oshima T."/>
            <person name="Aiba H."/>
            <person name="Baba T."/>
            <person name="Fujita K."/>
            <person name="Hayashi K."/>
            <person name="Honjo A."/>
            <person name="Ikemoto K."/>
            <person name="Inada T."/>
            <person name="Itoh T."/>
            <person name="Kajihara M."/>
            <person name="Kanai K."/>
            <person name="Kashimoto K."/>
            <person name="Kimura S."/>
            <person name="Kitagawa M."/>
            <person name="Makino K."/>
            <person name="Masuda S."/>
            <person name="Miki T."/>
            <person name="Mizobuchi K."/>
            <person name="Mori H."/>
            <person name="Motomura K."/>
            <person name="Nakamura Y."/>
            <person name="Nashimoto H."/>
            <person name="Nishio Y."/>
            <person name="Saito N."/>
            <person name="Sampei G."/>
            <person name="Seki Y."/>
            <person name="Tagami H."/>
            <person name="Takemoto K."/>
            <person name="Wada C."/>
            <person name="Yamamoto Y."/>
            <person name="Yano M."/>
            <person name="Horiuchi T."/>
        </authorList>
    </citation>
    <scope>NUCLEOTIDE SEQUENCE [LARGE SCALE GENOMIC DNA]</scope>
    <source>
        <strain>K12 / W3110 / ATCC 27325 / DSM 5911</strain>
    </source>
</reference>
<reference key="2">
    <citation type="journal article" date="1997" name="Science">
        <title>The complete genome sequence of Escherichia coli K-12.</title>
        <authorList>
            <person name="Blattner F.R."/>
            <person name="Plunkett G. III"/>
            <person name="Bloch C.A."/>
            <person name="Perna N.T."/>
            <person name="Burland V."/>
            <person name="Riley M."/>
            <person name="Collado-Vides J."/>
            <person name="Glasner J.D."/>
            <person name="Rode C.K."/>
            <person name="Mayhew G.F."/>
            <person name="Gregor J."/>
            <person name="Davis N.W."/>
            <person name="Kirkpatrick H.A."/>
            <person name="Goeden M.A."/>
            <person name="Rose D.J."/>
            <person name="Mau B."/>
            <person name="Shao Y."/>
        </authorList>
    </citation>
    <scope>NUCLEOTIDE SEQUENCE [LARGE SCALE GENOMIC DNA]</scope>
    <source>
        <strain>K12 / MG1655 / ATCC 47076</strain>
    </source>
</reference>
<reference key="3">
    <citation type="journal article" date="2006" name="Mol. Syst. Biol.">
        <title>Highly accurate genome sequences of Escherichia coli K-12 strains MG1655 and W3110.</title>
        <authorList>
            <person name="Hayashi K."/>
            <person name="Morooka N."/>
            <person name="Yamamoto Y."/>
            <person name="Fujita K."/>
            <person name="Isono K."/>
            <person name="Choi S."/>
            <person name="Ohtsubo E."/>
            <person name="Baba T."/>
            <person name="Wanner B.L."/>
            <person name="Mori H."/>
            <person name="Horiuchi T."/>
        </authorList>
    </citation>
    <scope>NUCLEOTIDE SEQUENCE [LARGE SCALE GENOMIC DNA]</scope>
    <source>
        <strain>K12 / W3110 / ATCC 27325 / DSM 5911</strain>
    </source>
</reference>
<reference key="4">
    <citation type="journal article" date="1999" name="Electrophoresis">
        <title>Enrichment of low abundance proteins of Escherichia coli by hydroxyapatite chromatography.</title>
        <authorList>
            <person name="Fountoulakis M."/>
            <person name="Takacs M.-F."/>
            <person name="Berndt P."/>
            <person name="Langen H."/>
            <person name="Takacs B."/>
        </authorList>
    </citation>
    <scope>IDENTIFICATION BY MASS SPECTROMETRY</scope>
    <source>
        <strain>B / BL21</strain>
    </source>
</reference>
<reference key="5">
    <citation type="journal article" date="2005" name="J. Bacteriol.">
        <title>The yliA, -B, -C, and -D genes of Escherichia coli K-12 encode a novel glutathione importer with an ATP-binding cassette.</title>
        <authorList>
            <person name="Suzuki H."/>
            <person name="Koyanagi T."/>
            <person name="Izuka S."/>
            <person name="Onishi A."/>
            <person name="Kumagai H."/>
        </authorList>
    </citation>
    <scope>FUNCTION IN GLUTATHIONE TRANSPORT</scope>
    <scope>SUBUNIT</scope>
    <source>
        <strain>K12 / MG1655 / ATCC 47076</strain>
    </source>
</reference>
<reference key="6">
    <citation type="journal article" date="2018" name="Biomed. Res. Int.">
        <title>Purification and characterization of glutathione binding protein GsiB from Escherichia coli.</title>
        <authorList>
            <person name="Wang Z."/>
            <person name="Xia X."/>
            <person name="Zhang M."/>
            <person name="Fang J."/>
            <person name="Li Y."/>
            <person name="Zhang M."/>
        </authorList>
    </citation>
    <scope>FUNCTION</scope>
    <scope>INTERACTION WITH GSIC AND GSID</scope>
    <scope>DOMAIN</scope>
    <source>
        <strain>K12 / MG1655 / ATCC 47076</strain>
    </source>
</reference>
<reference key="7">
    <citation type="journal article" date="2003" name="J. Struct. Funct. Genomics">
        <title>Structural genomics of highly conserved microbial genes of unknown function in search of new antibacterial targets.</title>
        <authorList>
            <person name="Abergel C."/>
            <person name="Coutard B."/>
            <person name="Byrne D."/>
            <person name="Chenivesse S."/>
            <person name="Claude J.-B."/>
            <person name="Deregnaucourt C."/>
            <person name="Fricaux T."/>
            <person name="Gianesini-Boutreux C."/>
            <person name="Jeudy S."/>
            <person name="Lebrun R."/>
            <person name="Maza C."/>
            <person name="Notredame C."/>
            <person name="Poirot O."/>
            <person name="Suhre K."/>
            <person name="Varagnol M."/>
            <person name="Claverie J.-M."/>
        </authorList>
    </citation>
    <scope>X-RAY CRYSTALLOGRAPHY (2.72 ANGSTROMS) OF 24-512</scope>
</reference>
<gene>
    <name evidence="4" type="primary">gsiB</name>
    <name type="synonym">yliB</name>
    <name type="ordered locus">b0830</name>
    <name type="ordered locus">JW5111</name>
</gene>
<evidence type="ECO:0000255" key="1"/>
<evidence type="ECO:0000269" key="2">
    <source>
    </source>
</evidence>
<evidence type="ECO:0000269" key="3">
    <source>
    </source>
</evidence>
<evidence type="ECO:0000303" key="4">
    <source>
    </source>
</evidence>
<evidence type="ECO:0000305" key="5"/>
<evidence type="ECO:0000305" key="6">
    <source>
    </source>
</evidence>
<evidence type="ECO:0007829" key="7">
    <source>
        <dbReference type="PDB" id="1UQW"/>
    </source>
</evidence>
<sequence length="512" mass="56470">MARAVHRSGLVALGIATALMASCAFAAKDVVVAVGSNFTTLDPYDANDTLSQAVAKSFYQGLFGLDKEMKLKNVLAESYTVSDDGITYTVKLREGIKFQDGTDFNAAAVKANLDRASDPANHLKRYNLYKNIAKTEAIDPTTVKITLKQPFSAFINILAHPATAMISPAALEKYGKEIGFYPVGTGPYELDTWNQTDFVKVKKFAGYWQPGLPKLDSITWRPVADNNTRAAMLQTGEAQFAFPIPYEQATLLEKNKNIELMASPSIMQRYISMNVTQKPFDNPKVREALNYAINRPALVKVAFAGYATPATGVVPPSIAYAQSYKPWPYDPVKARELLKEAGYPNGFSTTLWSSHNHSTAQKVLQFTQQQLAQVGIKAQVTAMDAGQRAAEVEGKGQKESGVRMFYTGWSASTGEADWALSPLFASQNWPPTLFNTAFYSNKQVDDFLAQALKTNDPAEKTRLYKAAQDIIWQESPWIPLVVEKLVSAHSKNLTGFWIMPDTGFSFEDADLQ</sequence>
<name>GSIB_ECOLI</name>